<organism>
    <name type="scientific">Elusimicrobium minutum (strain Pei191)</name>
    <dbReference type="NCBI Taxonomy" id="445932"/>
    <lineage>
        <taxon>Bacteria</taxon>
        <taxon>Pseudomonadati</taxon>
        <taxon>Elusimicrobiota</taxon>
        <taxon>Elusimicrobia</taxon>
        <taxon>Elusimicrobiales</taxon>
        <taxon>Elusimicrobiaceae</taxon>
        <taxon>Elusimicrobium</taxon>
    </lineage>
</organism>
<keyword id="KW-0312">Gluconeogenesis</keyword>
<keyword id="KW-0324">Glycolysis</keyword>
<keyword id="KW-0413">Isomerase</keyword>
<keyword id="KW-1185">Reference proteome</keyword>
<evidence type="ECO:0000255" key="1">
    <source>
        <dbReference type="HAMAP-Rule" id="MF_01039"/>
    </source>
</evidence>
<reference key="1">
    <citation type="journal article" date="2009" name="Appl. Environ. Microbiol.">
        <title>Genomic analysis of 'Elusimicrobium minutum,' the first cultivated representative of the phylum 'Elusimicrobia' (formerly termite group 1).</title>
        <authorList>
            <person name="Herlemann D.P.R."/>
            <person name="Geissinger O."/>
            <person name="Ikeda-Ohtsubo W."/>
            <person name="Kunin V."/>
            <person name="Sun H."/>
            <person name="Lapidus A."/>
            <person name="Hugenholtz P."/>
            <person name="Brune A."/>
        </authorList>
    </citation>
    <scope>NUCLEOTIDE SEQUENCE [LARGE SCALE GENOMIC DNA]</scope>
    <source>
        <strain>Pei191</strain>
    </source>
</reference>
<dbReference type="EC" id="5.4.2.11" evidence="1"/>
<dbReference type="EMBL" id="CP001055">
    <property type="protein sequence ID" value="ACC97848.1"/>
    <property type="molecule type" value="Genomic_DNA"/>
</dbReference>
<dbReference type="RefSeq" id="WP_012414463.1">
    <property type="nucleotide sequence ID" value="NC_010644.1"/>
</dbReference>
<dbReference type="SMR" id="B2KBU4"/>
<dbReference type="STRING" id="445932.Emin_0287"/>
<dbReference type="KEGG" id="emi:Emin_0287"/>
<dbReference type="HOGENOM" id="CLU_033323_1_1_0"/>
<dbReference type="OrthoDB" id="9781415at2"/>
<dbReference type="UniPathway" id="UPA00109">
    <property type="reaction ID" value="UER00186"/>
</dbReference>
<dbReference type="Proteomes" id="UP000001029">
    <property type="component" value="Chromosome"/>
</dbReference>
<dbReference type="GO" id="GO:0004619">
    <property type="term" value="F:phosphoglycerate mutase activity"/>
    <property type="evidence" value="ECO:0007669"/>
    <property type="project" value="UniProtKB-EC"/>
</dbReference>
<dbReference type="GO" id="GO:0006094">
    <property type="term" value="P:gluconeogenesis"/>
    <property type="evidence" value="ECO:0007669"/>
    <property type="project" value="UniProtKB-UniRule"/>
</dbReference>
<dbReference type="GO" id="GO:0006096">
    <property type="term" value="P:glycolytic process"/>
    <property type="evidence" value="ECO:0007669"/>
    <property type="project" value="UniProtKB-UniRule"/>
</dbReference>
<dbReference type="CDD" id="cd07067">
    <property type="entry name" value="HP_PGM_like"/>
    <property type="match status" value="1"/>
</dbReference>
<dbReference type="FunFam" id="3.40.50.1240:FF:000003">
    <property type="entry name" value="2,3-bisphosphoglycerate-dependent phosphoglycerate mutase"/>
    <property type="match status" value="1"/>
</dbReference>
<dbReference type="Gene3D" id="3.40.50.1240">
    <property type="entry name" value="Phosphoglycerate mutase-like"/>
    <property type="match status" value="1"/>
</dbReference>
<dbReference type="HAMAP" id="MF_01039">
    <property type="entry name" value="PGAM_GpmA"/>
    <property type="match status" value="1"/>
</dbReference>
<dbReference type="InterPro" id="IPR013078">
    <property type="entry name" value="His_Pase_superF_clade-1"/>
</dbReference>
<dbReference type="InterPro" id="IPR029033">
    <property type="entry name" value="His_PPase_superfam"/>
</dbReference>
<dbReference type="InterPro" id="IPR001345">
    <property type="entry name" value="PG/BPGM_mutase_AS"/>
</dbReference>
<dbReference type="InterPro" id="IPR005952">
    <property type="entry name" value="Phosphogly_mut1"/>
</dbReference>
<dbReference type="NCBIfam" id="TIGR01258">
    <property type="entry name" value="pgm_1"/>
    <property type="match status" value="1"/>
</dbReference>
<dbReference type="NCBIfam" id="NF010713">
    <property type="entry name" value="PRK14115.1"/>
    <property type="match status" value="1"/>
</dbReference>
<dbReference type="PANTHER" id="PTHR11931">
    <property type="entry name" value="PHOSPHOGLYCERATE MUTASE"/>
    <property type="match status" value="1"/>
</dbReference>
<dbReference type="Pfam" id="PF00300">
    <property type="entry name" value="His_Phos_1"/>
    <property type="match status" value="2"/>
</dbReference>
<dbReference type="PIRSF" id="PIRSF000709">
    <property type="entry name" value="6PFK_2-Ptase"/>
    <property type="match status" value="1"/>
</dbReference>
<dbReference type="SMART" id="SM00855">
    <property type="entry name" value="PGAM"/>
    <property type="match status" value="1"/>
</dbReference>
<dbReference type="SUPFAM" id="SSF53254">
    <property type="entry name" value="Phosphoglycerate mutase-like"/>
    <property type="match status" value="1"/>
</dbReference>
<dbReference type="PROSITE" id="PS00175">
    <property type="entry name" value="PG_MUTASE"/>
    <property type="match status" value="1"/>
</dbReference>
<name>GPMA_ELUMP</name>
<protein>
    <recommendedName>
        <fullName evidence="1">2,3-bisphosphoglycerate-dependent phosphoglycerate mutase</fullName>
        <shortName evidence="1">BPG-dependent PGAM</shortName>
        <shortName evidence="1">PGAM</shortName>
        <shortName evidence="1">Phosphoglyceromutase</shortName>
        <shortName evidence="1">dPGM</shortName>
        <ecNumber evidence="1">5.4.2.11</ecNumber>
    </recommendedName>
</protein>
<feature type="chain" id="PRO_1000135951" description="2,3-bisphosphoglycerate-dependent phosphoglycerate mutase">
    <location>
        <begin position="1"/>
        <end position="248"/>
    </location>
</feature>
<feature type="active site" description="Tele-phosphohistidine intermediate" evidence="1">
    <location>
        <position position="9"/>
    </location>
</feature>
<feature type="active site" description="Proton donor/acceptor" evidence="1">
    <location>
        <position position="87"/>
    </location>
</feature>
<feature type="binding site" evidence="1">
    <location>
        <begin position="8"/>
        <end position="15"/>
    </location>
    <ligand>
        <name>substrate</name>
    </ligand>
</feature>
<feature type="binding site" evidence="1">
    <location>
        <begin position="21"/>
        <end position="22"/>
    </location>
    <ligand>
        <name>substrate</name>
    </ligand>
</feature>
<feature type="binding site" evidence="1">
    <location>
        <position position="60"/>
    </location>
    <ligand>
        <name>substrate</name>
    </ligand>
</feature>
<feature type="binding site" evidence="1">
    <location>
        <begin position="87"/>
        <end position="90"/>
    </location>
    <ligand>
        <name>substrate</name>
    </ligand>
</feature>
<feature type="binding site" evidence="1">
    <location>
        <position position="98"/>
    </location>
    <ligand>
        <name>substrate</name>
    </ligand>
</feature>
<feature type="binding site" evidence="1">
    <location>
        <begin position="114"/>
        <end position="115"/>
    </location>
    <ligand>
        <name>substrate</name>
    </ligand>
</feature>
<feature type="binding site" evidence="1">
    <location>
        <begin position="183"/>
        <end position="184"/>
    </location>
    <ligand>
        <name>substrate</name>
    </ligand>
</feature>
<feature type="site" description="Transition state stabilizer" evidence="1">
    <location>
        <position position="182"/>
    </location>
</feature>
<proteinExistence type="inferred from homology"/>
<gene>
    <name evidence="1" type="primary">gpmA</name>
    <name type="ordered locus">Emin_0287</name>
</gene>
<sequence>MKKIVLLRHGESTWNKENRFTGWTDVDLTEKGVAEAAKAGEILKKEGFIFDKAYTSYLKRAVKTLNCVLDKMDLDWINVEKTWRLNEKHYGTLQGLNKAETAEKYGAEQVQLWRRSFDIAPDPIPEDDPRNPRKDIRYKNVTNADLPATESLKDTIARTMPYWTDVIMKQLKTSNQLIVVAHGNSLRGVIKHLKNISDEDIVNLNLPTAVPYVFEFDDNLNMTRDYFLGDPEEVKKLMEAVANQAKKK</sequence>
<accession>B2KBU4</accession>
<comment type="function">
    <text evidence="1">Catalyzes the interconversion of 2-phosphoglycerate and 3-phosphoglycerate.</text>
</comment>
<comment type="catalytic activity">
    <reaction evidence="1">
        <text>(2R)-2-phosphoglycerate = (2R)-3-phosphoglycerate</text>
        <dbReference type="Rhea" id="RHEA:15901"/>
        <dbReference type="ChEBI" id="CHEBI:58272"/>
        <dbReference type="ChEBI" id="CHEBI:58289"/>
        <dbReference type="EC" id="5.4.2.11"/>
    </reaction>
</comment>
<comment type="pathway">
    <text evidence="1">Carbohydrate degradation; glycolysis; pyruvate from D-glyceraldehyde 3-phosphate: step 3/5.</text>
</comment>
<comment type="similarity">
    <text evidence="1">Belongs to the phosphoglycerate mutase family. BPG-dependent PGAM subfamily.</text>
</comment>